<keyword id="KW-0413">Isomerase</keyword>
<keyword id="KW-1185">Reference proteome</keyword>
<gene>
    <name type="ORF">ASPCADRAFT_209537</name>
</gene>
<proteinExistence type="inferred from homology"/>
<dbReference type="EC" id="5.-.-.-" evidence="4"/>
<dbReference type="EMBL" id="KV907504">
    <property type="protein sequence ID" value="OOF93600.1"/>
    <property type="status" value="ALT_TERM"/>
    <property type="molecule type" value="Genomic_DNA"/>
</dbReference>
<dbReference type="SMR" id="A0A1R3RGJ9"/>
<dbReference type="VEuPathDB" id="FungiDB:ASPCADRAFT_209537"/>
<dbReference type="OrthoDB" id="4469620at2759"/>
<dbReference type="Proteomes" id="UP000188318">
    <property type="component" value="Unassembled WGS sequence"/>
</dbReference>
<dbReference type="GO" id="GO:0016853">
    <property type="term" value="F:isomerase activity"/>
    <property type="evidence" value="ECO:0007669"/>
    <property type="project" value="UniProtKB-KW"/>
</dbReference>
<dbReference type="GO" id="GO:1900818">
    <property type="term" value="P:ochratoxin A biosynthetic process"/>
    <property type="evidence" value="ECO:0000270"/>
    <property type="project" value="GO_Central"/>
</dbReference>
<dbReference type="Gene3D" id="3.10.450.50">
    <property type="match status" value="1"/>
</dbReference>
<dbReference type="InterPro" id="IPR032710">
    <property type="entry name" value="NTF2-like_dom_sf"/>
</dbReference>
<dbReference type="InterPro" id="IPR037401">
    <property type="entry name" value="SnoaL-like"/>
</dbReference>
<dbReference type="Pfam" id="PF12680">
    <property type="entry name" value="SnoaL_2"/>
    <property type="match status" value="1"/>
</dbReference>
<dbReference type="SUPFAM" id="SSF54427">
    <property type="entry name" value="NTF2-like"/>
    <property type="match status" value="1"/>
</dbReference>
<protein>
    <recommendedName>
        <fullName evidence="2">Probable cyclase otaY</fullName>
        <ecNumber evidence="4">5.-.-.-</ecNumber>
    </recommendedName>
    <alternativeName>
        <fullName evidence="2">Ochratoxin A biosynthesis cluster protein Y</fullName>
    </alternativeName>
</protein>
<reference key="1">
    <citation type="journal article" date="2017" name="Genome Biol.">
        <title>Comparative genomics reveals high biological diversity and specific adaptations in the industrially and medically important fungal genus Aspergillus.</title>
        <authorList>
            <person name="de Vries R.P."/>
            <person name="Riley R."/>
            <person name="Wiebenga A."/>
            <person name="Aguilar-Osorio G."/>
            <person name="Amillis S."/>
            <person name="Uchima C.A."/>
            <person name="Anderluh G."/>
            <person name="Asadollahi M."/>
            <person name="Askin M."/>
            <person name="Barry K."/>
            <person name="Battaglia E."/>
            <person name="Bayram O."/>
            <person name="Benocci T."/>
            <person name="Braus-Stromeyer S.A."/>
            <person name="Caldana C."/>
            <person name="Canovas D."/>
            <person name="Cerqueira G.C."/>
            <person name="Chen F."/>
            <person name="Chen W."/>
            <person name="Choi C."/>
            <person name="Clum A."/>
            <person name="Dos Santos R.A."/>
            <person name="Damasio A.R."/>
            <person name="Diallinas G."/>
            <person name="Emri T."/>
            <person name="Fekete E."/>
            <person name="Flipphi M."/>
            <person name="Freyberg S."/>
            <person name="Gallo A."/>
            <person name="Gournas C."/>
            <person name="Habgood R."/>
            <person name="Hainaut M."/>
            <person name="Harispe M.L."/>
            <person name="Henrissat B."/>
            <person name="Hilden K.S."/>
            <person name="Hope R."/>
            <person name="Hossain A."/>
            <person name="Karabika E."/>
            <person name="Karaffa L."/>
            <person name="Karanyi Z."/>
            <person name="Krasevec N."/>
            <person name="Kuo A."/>
            <person name="Kusch H."/>
            <person name="LaButti K."/>
            <person name="Lagendijk E.L."/>
            <person name="Lapidus A."/>
            <person name="Levasseur A."/>
            <person name="Lindquist E."/>
            <person name="Lipzen A."/>
            <person name="Logrieco A.F."/>
            <person name="MacCabe A."/>
            <person name="Maekelae M.R."/>
            <person name="Malavazi I."/>
            <person name="Melin P."/>
            <person name="Meyer V."/>
            <person name="Mielnichuk N."/>
            <person name="Miskei M."/>
            <person name="Molnar A.P."/>
            <person name="Mule G."/>
            <person name="Ngan C.Y."/>
            <person name="Orejas M."/>
            <person name="Orosz E."/>
            <person name="Ouedraogo J.P."/>
            <person name="Overkamp K.M."/>
            <person name="Park H.-S."/>
            <person name="Perrone G."/>
            <person name="Piumi F."/>
            <person name="Punt P.J."/>
            <person name="Ram A.F."/>
            <person name="Ramon A."/>
            <person name="Rauscher S."/>
            <person name="Record E."/>
            <person name="Riano-Pachon D.M."/>
            <person name="Robert V."/>
            <person name="Roehrig J."/>
            <person name="Ruller R."/>
            <person name="Salamov A."/>
            <person name="Salih N.S."/>
            <person name="Samson R.A."/>
            <person name="Sandor E."/>
            <person name="Sanguinetti M."/>
            <person name="Schuetze T."/>
            <person name="Sepcic K."/>
            <person name="Shelest E."/>
            <person name="Sherlock G."/>
            <person name="Sophianopoulou V."/>
            <person name="Squina F.M."/>
            <person name="Sun H."/>
            <person name="Susca A."/>
            <person name="Todd R.B."/>
            <person name="Tsang A."/>
            <person name="Unkles S.E."/>
            <person name="van de Wiele N."/>
            <person name="van Rossen-Uffink D."/>
            <person name="Oliveira J.V."/>
            <person name="Vesth T.C."/>
            <person name="Visser J."/>
            <person name="Yu J.-H."/>
            <person name="Zhou M."/>
            <person name="Andersen M.R."/>
            <person name="Archer D.B."/>
            <person name="Baker S.E."/>
            <person name="Benoit I."/>
            <person name="Brakhage A.A."/>
            <person name="Braus G.H."/>
            <person name="Fischer R."/>
            <person name="Frisvad J.C."/>
            <person name="Goldman G.H."/>
            <person name="Houbraken J."/>
            <person name="Oakley B."/>
            <person name="Pocsi I."/>
            <person name="Scazzocchio C."/>
            <person name="Seiboth B."/>
            <person name="vanKuyk P.A."/>
            <person name="Wortman J."/>
            <person name="Dyer P.S."/>
            <person name="Grigoriev I.V."/>
        </authorList>
    </citation>
    <scope>NUCLEOTIDE SEQUENCE [LARGE SCALE GENOMIC DNA]</scope>
    <source>
        <strain>ITEM 5010</strain>
    </source>
</reference>
<reference key="2">
    <citation type="journal article" date="2020" name="Front. Microbiol.">
        <title>Comparative genomic analysis of ochratoxin A biosynthetic cluster in producing fungi: new evidence of a cyclase gene involvement.</title>
        <authorList>
            <person name="Ferrara M."/>
            <person name="Gallo A."/>
            <person name="Perrone G."/>
            <person name="Magista D."/>
            <person name="Baker S.E."/>
        </authorList>
    </citation>
    <scope>IDENTIFICATION</scope>
    <scope>FUNCTION</scope>
    <scope>PATHWAY</scope>
</reference>
<evidence type="ECO:0000269" key="1">
    <source>
    </source>
</evidence>
<evidence type="ECO:0000303" key="2">
    <source>
    </source>
</evidence>
<evidence type="ECO:0000305" key="3"/>
<evidence type="ECO:0000305" key="4">
    <source>
    </source>
</evidence>
<organism>
    <name type="scientific">Aspergillus carbonarius (strain ITEM 5010)</name>
    <dbReference type="NCBI Taxonomy" id="602072"/>
    <lineage>
        <taxon>Eukaryota</taxon>
        <taxon>Fungi</taxon>
        <taxon>Dikarya</taxon>
        <taxon>Ascomycota</taxon>
        <taxon>Pezizomycotina</taxon>
        <taxon>Eurotiomycetes</taxon>
        <taxon>Eurotiomycetidae</taxon>
        <taxon>Eurotiales</taxon>
        <taxon>Aspergillaceae</taxon>
        <taxon>Aspergillus</taxon>
        <taxon>Aspergillus subgen. Circumdati</taxon>
    </lineage>
</organism>
<comment type="function">
    <text evidence="1 4">Probable cyclase; part of the gene cluster that mediates the biosynthesis of ochratoxin A (OTA), a mycotoxin composed of a chlorinated type I polyketide dihydroisocoumarin moiety linked to L-phenylalanine, and demonstrated to have nephrotoxic, immunotoxic, genotoxic, neurotoxic, and teratogenic properties (PubMed:33391201). OtaY is probably involved in the polyketide cyclization (Probable) (PubMed:33391201). The pathway begins with the highly reducing polyketide synthase otaA that catalyzes the formation of the isocoumarin group during the initial stages of biosynthesis, starting from one acetate and 4 malonate units, to originate the characteristic pentaketide skeleton 7-methylmellein (7-MM) of the OTA molecule. The newly identified cyclase otaY might be involved in the polyketide cyclization reaction during the initial steps of the OTA biosynthesis. 7-MM is then oxidized into 7-carboxymellein (also called ochratoxin beta) by the cytochrome P450 monooxygenase otaC. The NRPS encoded by the otaB gene is involved in the linking of phenylalanine to the dihydroisocoumarin ring. The reaction catalyzed by NRPS results in the production of ochratoxin B (OTB), which is the non-chlorinated analog of OTA and which subsequently serves as the substrate of the halogenase otaD for chlorination activity to form the final molecular structure of OTA, containing a chlorine atom in the C-5 position of the molecule (Probable) (PubMed:33391201).</text>
</comment>
<comment type="pathway">
    <text evidence="4">Mycotoxin biosynthesis.</text>
</comment>
<comment type="similarity">
    <text evidence="3">Belongs to the aurE cyclase family.</text>
</comment>
<comment type="sequence caution" evidence="3">
    <conflict type="erroneous termination">
        <sequence resource="EMBL-CDS" id="OOF93600"/>
    </conflict>
    <text>Truncated C-terminus.</text>
</comment>
<accession>A0A1R3RGJ9</accession>
<sequence length="123" mass="13873">MTTPTPTTLKHHATTILTTLVNDRQTAAIEHLLHPTITLKHNDLPAMSKSELIAFWPEVLAQSPHFRVQIRDVIAEGNKVWVYSRVEGRLGEGVMDDFHMMVFDEEGLVVRSTGVQRVVEGEM</sequence>
<feature type="chain" id="PRO_0000453469" description="Probable cyclase otaY">
    <location>
        <begin position="1"/>
        <end position="123"/>
    </location>
</feature>
<name>OTAY_ASPC5</name>